<dbReference type="EC" id="4.2.1.9" evidence="1"/>
<dbReference type="EMBL" id="CP001099">
    <property type="protein sequence ID" value="ACF11055.1"/>
    <property type="molecule type" value="Genomic_DNA"/>
</dbReference>
<dbReference type="RefSeq" id="WP_012501888.1">
    <property type="nucleotide sequence ID" value="NC_011027.1"/>
</dbReference>
<dbReference type="SMR" id="B3QMA2"/>
<dbReference type="STRING" id="517417.Cpar_0635"/>
<dbReference type="KEGG" id="cpc:Cpar_0635"/>
<dbReference type="eggNOG" id="COG0129">
    <property type="taxonomic scope" value="Bacteria"/>
</dbReference>
<dbReference type="HOGENOM" id="CLU_014271_4_2_10"/>
<dbReference type="OrthoDB" id="9807077at2"/>
<dbReference type="UniPathway" id="UPA00047">
    <property type="reaction ID" value="UER00057"/>
</dbReference>
<dbReference type="UniPathway" id="UPA00049">
    <property type="reaction ID" value="UER00061"/>
</dbReference>
<dbReference type="Proteomes" id="UP000008811">
    <property type="component" value="Chromosome"/>
</dbReference>
<dbReference type="GO" id="GO:0005829">
    <property type="term" value="C:cytosol"/>
    <property type="evidence" value="ECO:0007669"/>
    <property type="project" value="TreeGrafter"/>
</dbReference>
<dbReference type="GO" id="GO:0051537">
    <property type="term" value="F:2 iron, 2 sulfur cluster binding"/>
    <property type="evidence" value="ECO:0007669"/>
    <property type="project" value="UniProtKB-UniRule"/>
</dbReference>
<dbReference type="GO" id="GO:0004160">
    <property type="term" value="F:dihydroxy-acid dehydratase activity"/>
    <property type="evidence" value="ECO:0007669"/>
    <property type="project" value="UniProtKB-UniRule"/>
</dbReference>
<dbReference type="GO" id="GO:0000287">
    <property type="term" value="F:magnesium ion binding"/>
    <property type="evidence" value="ECO:0007669"/>
    <property type="project" value="UniProtKB-UniRule"/>
</dbReference>
<dbReference type="GO" id="GO:0009097">
    <property type="term" value="P:isoleucine biosynthetic process"/>
    <property type="evidence" value="ECO:0007669"/>
    <property type="project" value="UniProtKB-UniRule"/>
</dbReference>
<dbReference type="GO" id="GO:0009099">
    <property type="term" value="P:L-valine biosynthetic process"/>
    <property type="evidence" value="ECO:0007669"/>
    <property type="project" value="UniProtKB-UniRule"/>
</dbReference>
<dbReference type="FunFam" id="3.50.30.80:FF:000001">
    <property type="entry name" value="Dihydroxy-acid dehydratase"/>
    <property type="match status" value="1"/>
</dbReference>
<dbReference type="Gene3D" id="3.50.30.80">
    <property type="entry name" value="IlvD/EDD C-terminal domain-like"/>
    <property type="match status" value="1"/>
</dbReference>
<dbReference type="HAMAP" id="MF_00012">
    <property type="entry name" value="IlvD"/>
    <property type="match status" value="1"/>
</dbReference>
<dbReference type="InterPro" id="IPR042096">
    <property type="entry name" value="Dihydro-acid_dehy_C"/>
</dbReference>
<dbReference type="InterPro" id="IPR004404">
    <property type="entry name" value="DihydroxyA_deHydtase"/>
</dbReference>
<dbReference type="InterPro" id="IPR020558">
    <property type="entry name" value="DiOHA_6PGluconate_deHydtase_CS"/>
</dbReference>
<dbReference type="InterPro" id="IPR056740">
    <property type="entry name" value="ILV_EDD_C"/>
</dbReference>
<dbReference type="InterPro" id="IPR000581">
    <property type="entry name" value="ILV_EDD_N"/>
</dbReference>
<dbReference type="InterPro" id="IPR037237">
    <property type="entry name" value="IlvD/EDD_N"/>
</dbReference>
<dbReference type="NCBIfam" id="TIGR00110">
    <property type="entry name" value="ilvD"/>
    <property type="match status" value="1"/>
</dbReference>
<dbReference type="NCBIfam" id="NF002068">
    <property type="entry name" value="PRK00911.1"/>
    <property type="match status" value="1"/>
</dbReference>
<dbReference type="PANTHER" id="PTHR43661">
    <property type="entry name" value="D-XYLONATE DEHYDRATASE"/>
    <property type="match status" value="1"/>
</dbReference>
<dbReference type="PANTHER" id="PTHR43661:SF3">
    <property type="entry name" value="D-XYLONATE DEHYDRATASE YAGF-RELATED"/>
    <property type="match status" value="1"/>
</dbReference>
<dbReference type="Pfam" id="PF24877">
    <property type="entry name" value="ILV_EDD_C"/>
    <property type="match status" value="1"/>
</dbReference>
<dbReference type="Pfam" id="PF00920">
    <property type="entry name" value="ILVD_EDD_N"/>
    <property type="match status" value="1"/>
</dbReference>
<dbReference type="SUPFAM" id="SSF143975">
    <property type="entry name" value="IlvD/EDD N-terminal domain-like"/>
    <property type="match status" value="1"/>
</dbReference>
<dbReference type="SUPFAM" id="SSF52016">
    <property type="entry name" value="LeuD/IlvD-like"/>
    <property type="match status" value="1"/>
</dbReference>
<dbReference type="PROSITE" id="PS00886">
    <property type="entry name" value="ILVD_EDD_1"/>
    <property type="match status" value="1"/>
</dbReference>
<dbReference type="PROSITE" id="PS00887">
    <property type="entry name" value="ILVD_EDD_2"/>
    <property type="match status" value="1"/>
</dbReference>
<name>ILVD_CHLP8</name>
<reference key="1">
    <citation type="submission" date="2008-06" db="EMBL/GenBank/DDBJ databases">
        <title>Complete sequence of Chlorobaculum parvum NCIB 8327.</title>
        <authorList>
            <consortium name="US DOE Joint Genome Institute"/>
            <person name="Lucas S."/>
            <person name="Copeland A."/>
            <person name="Lapidus A."/>
            <person name="Glavina del Rio T."/>
            <person name="Dalin E."/>
            <person name="Tice H."/>
            <person name="Bruce D."/>
            <person name="Goodwin L."/>
            <person name="Pitluck S."/>
            <person name="Schmutz J."/>
            <person name="Larimer F."/>
            <person name="Land M."/>
            <person name="Hauser L."/>
            <person name="Kyrpides N."/>
            <person name="Mikhailova N."/>
            <person name="Zhao F."/>
            <person name="Li T."/>
            <person name="Liu Z."/>
            <person name="Overmann J."/>
            <person name="Bryant D.A."/>
            <person name="Richardson P."/>
        </authorList>
    </citation>
    <scope>NUCLEOTIDE SEQUENCE [LARGE SCALE GENOMIC DNA]</scope>
    <source>
        <strain>DSM 263 / NCIMB 8327</strain>
    </source>
</reference>
<gene>
    <name evidence="1" type="primary">ilvD</name>
    <name type="ordered locus">Cpar_0635</name>
</gene>
<organism>
    <name type="scientific">Chlorobaculum parvum (strain DSM 263 / NCIMB 8327)</name>
    <name type="common">Chlorobium vibrioforme subsp. thiosulfatophilum</name>
    <dbReference type="NCBI Taxonomy" id="517417"/>
    <lineage>
        <taxon>Bacteria</taxon>
        <taxon>Pseudomonadati</taxon>
        <taxon>Chlorobiota</taxon>
        <taxon>Chlorobiia</taxon>
        <taxon>Chlorobiales</taxon>
        <taxon>Chlorobiaceae</taxon>
        <taxon>Chlorobaculum</taxon>
    </lineage>
</organism>
<accession>B3QMA2</accession>
<keyword id="KW-0001">2Fe-2S</keyword>
<keyword id="KW-0028">Amino-acid biosynthesis</keyword>
<keyword id="KW-0100">Branched-chain amino acid biosynthesis</keyword>
<keyword id="KW-0408">Iron</keyword>
<keyword id="KW-0411">Iron-sulfur</keyword>
<keyword id="KW-0456">Lyase</keyword>
<keyword id="KW-0460">Magnesium</keyword>
<keyword id="KW-0479">Metal-binding</keyword>
<evidence type="ECO:0000255" key="1">
    <source>
        <dbReference type="HAMAP-Rule" id="MF_00012"/>
    </source>
</evidence>
<comment type="function">
    <text evidence="1">Functions in the biosynthesis of branched-chain amino acids. Catalyzes the dehydration of (2R,3R)-2,3-dihydroxy-3-methylpentanoate (2,3-dihydroxy-3-methylvalerate) into 2-oxo-3-methylpentanoate (2-oxo-3-methylvalerate) and of (2R)-2,3-dihydroxy-3-methylbutanoate (2,3-dihydroxyisovalerate) into 2-oxo-3-methylbutanoate (2-oxoisovalerate), the penultimate precursor to L-isoleucine and L-valine, respectively.</text>
</comment>
<comment type="catalytic activity">
    <reaction evidence="1">
        <text>(2R)-2,3-dihydroxy-3-methylbutanoate = 3-methyl-2-oxobutanoate + H2O</text>
        <dbReference type="Rhea" id="RHEA:24809"/>
        <dbReference type="ChEBI" id="CHEBI:11851"/>
        <dbReference type="ChEBI" id="CHEBI:15377"/>
        <dbReference type="ChEBI" id="CHEBI:49072"/>
        <dbReference type="EC" id="4.2.1.9"/>
    </reaction>
    <physiologicalReaction direction="left-to-right" evidence="1">
        <dbReference type="Rhea" id="RHEA:24810"/>
    </physiologicalReaction>
</comment>
<comment type="catalytic activity">
    <reaction evidence="1">
        <text>(2R,3R)-2,3-dihydroxy-3-methylpentanoate = (S)-3-methyl-2-oxopentanoate + H2O</text>
        <dbReference type="Rhea" id="RHEA:27694"/>
        <dbReference type="ChEBI" id="CHEBI:15377"/>
        <dbReference type="ChEBI" id="CHEBI:35146"/>
        <dbReference type="ChEBI" id="CHEBI:49258"/>
        <dbReference type="EC" id="4.2.1.9"/>
    </reaction>
    <physiologicalReaction direction="left-to-right" evidence="1">
        <dbReference type="Rhea" id="RHEA:27695"/>
    </physiologicalReaction>
</comment>
<comment type="cofactor">
    <cofactor evidence="1">
        <name>[2Fe-2S] cluster</name>
        <dbReference type="ChEBI" id="CHEBI:190135"/>
    </cofactor>
    <text evidence="1">Binds 1 [2Fe-2S] cluster per subunit. This cluster acts as a Lewis acid cofactor.</text>
</comment>
<comment type="cofactor">
    <cofactor evidence="1">
        <name>Mg(2+)</name>
        <dbReference type="ChEBI" id="CHEBI:18420"/>
    </cofactor>
</comment>
<comment type="pathway">
    <text evidence="1">Amino-acid biosynthesis; L-isoleucine biosynthesis; L-isoleucine from 2-oxobutanoate: step 3/4.</text>
</comment>
<comment type="pathway">
    <text evidence="1">Amino-acid biosynthesis; L-valine biosynthesis; L-valine from pyruvate: step 3/4.</text>
</comment>
<comment type="subunit">
    <text evidence="1">Homodimer.</text>
</comment>
<comment type="similarity">
    <text evidence="1">Belongs to the IlvD/Edd family.</text>
</comment>
<feature type="chain" id="PRO_1000089374" description="Dihydroxy-acid dehydratase">
    <location>
        <begin position="1"/>
        <end position="560"/>
    </location>
</feature>
<feature type="active site" description="Proton acceptor" evidence="1">
    <location>
        <position position="473"/>
    </location>
</feature>
<feature type="binding site" evidence="1">
    <location>
        <position position="80"/>
    </location>
    <ligand>
        <name>Mg(2+)</name>
        <dbReference type="ChEBI" id="CHEBI:18420"/>
    </ligand>
</feature>
<feature type="binding site" evidence="1">
    <location>
        <position position="121"/>
    </location>
    <ligand>
        <name>[2Fe-2S] cluster</name>
        <dbReference type="ChEBI" id="CHEBI:190135"/>
    </ligand>
</feature>
<feature type="binding site" evidence="1">
    <location>
        <position position="122"/>
    </location>
    <ligand>
        <name>Mg(2+)</name>
        <dbReference type="ChEBI" id="CHEBI:18420"/>
    </ligand>
</feature>
<feature type="binding site" description="via carbamate group" evidence="1">
    <location>
        <position position="123"/>
    </location>
    <ligand>
        <name>Mg(2+)</name>
        <dbReference type="ChEBI" id="CHEBI:18420"/>
    </ligand>
</feature>
<feature type="binding site" evidence="1">
    <location>
        <position position="194"/>
    </location>
    <ligand>
        <name>[2Fe-2S] cluster</name>
        <dbReference type="ChEBI" id="CHEBI:190135"/>
    </ligand>
</feature>
<feature type="binding site" evidence="1">
    <location>
        <position position="447"/>
    </location>
    <ligand>
        <name>Mg(2+)</name>
        <dbReference type="ChEBI" id="CHEBI:18420"/>
    </ligand>
</feature>
<feature type="modified residue" description="N6-carboxylysine" evidence="1">
    <location>
        <position position="123"/>
    </location>
</feature>
<protein>
    <recommendedName>
        <fullName evidence="1">Dihydroxy-acid dehydratase</fullName>
        <shortName evidence="1">DAD</shortName>
        <ecNumber evidence="1">4.2.1.9</ecNumber>
    </recommendedName>
</protein>
<sequence length="560" mass="58824">MRSDTIKKGFEKAPHRSLLKATGAISTRDDYSKPFIGICNSFNELIPGHAHLQELGRIAKEAVREAGGVPFEFNTIGVCDGIAMGHVGMRYSLASRELIADSVETVVEAHRLDGLVCIPNCDKITPGMMMGALRTNVPVIFVSGGPMSAGHTPSGKTVDLISVFEAVGQCSTGEITEDELQTIEECGCPGCGSCSGMFTANSMNCLCEALGFALPGNGTILAADPRRNELVKAAAGRIVDLVNKDVRPRSILSRQSMLNAFALDLAMGGSTNTILHTLAIASEAELEFDFSELNDLSAKTPYICKVSPATTEVHIEDVDRAGGISAILKELSKVEGLLDLSAPTVTGKTLGENIADAEVLDRSVIRSVEEPYSATGGLAVLYGNLAPNGSVVKTGAVSPSMMKHTGPAKVYDCQDDAIAGIMNGDVKSGDVVVIRYEGPRGGPGMPEMLSPTSAIMGRGLGDSVALITDGRFSGGSRGACVGHVSPEAADRGPIAAVQTGDMITIDIPGRTMSVALDDETIRQRIEALPEFEPKIKKGYLARYARMVTSANTGAVLTTNF</sequence>
<proteinExistence type="inferred from homology"/>